<evidence type="ECO:0000250" key="1"/>
<evidence type="ECO:0000250" key="2">
    <source>
        <dbReference type="UniProtKB" id="O15409"/>
    </source>
</evidence>
<evidence type="ECO:0000250" key="3">
    <source>
        <dbReference type="UniProtKB" id="P58463"/>
    </source>
</evidence>
<evidence type="ECO:0000255" key="4">
    <source>
        <dbReference type="PROSITE-ProRule" id="PRU00089"/>
    </source>
</evidence>
<evidence type="ECO:0000256" key="5">
    <source>
        <dbReference type="SAM" id="MobiDB-lite"/>
    </source>
</evidence>
<evidence type="ECO:0000269" key="6">
    <source>
    </source>
</evidence>
<evidence type="ECO:0000305" key="7"/>
<name>FOXP2_RAT</name>
<reference key="1">
    <citation type="journal article" date="2004" name="Nature">
        <title>Genome sequence of the Brown Norway rat yields insights into mammalian evolution.</title>
        <authorList>
            <person name="Gibbs R.A."/>
            <person name="Weinstock G.M."/>
            <person name="Metzker M.L."/>
            <person name="Muzny D.M."/>
            <person name="Sodergren E.J."/>
            <person name="Scherer S."/>
            <person name="Scott G."/>
            <person name="Steffen D."/>
            <person name="Worley K.C."/>
            <person name="Burch P.E."/>
            <person name="Okwuonu G."/>
            <person name="Hines S."/>
            <person name="Lewis L."/>
            <person name="Deramo C."/>
            <person name="Delgado O."/>
            <person name="Dugan-Rocha S."/>
            <person name="Miner G."/>
            <person name="Morgan M."/>
            <person name="Hawes A."/>
            <person name="Gill R."/>
            <person name="Holt R.A."/>
            <person name="Adams M.D."/>
            <person name="Amanatides P.G."/>
            <person name="Baden-Tillson H."/>
            <person name="Barnstead M."/>
            <person name="Chin S."/>
            <person name="Evans C.A."/>
            <person name="Ferriera S."/>
            <person name="Fosler C."/>
            <person name="Glodek A."/>
            <person name="Gu Z."/>
            <person name="Jennings D."/>
            <person name="Kraft C.L."/>
            <person name="Nguyen T."/>
            <person name="Pfannkoch C.M."/>
            <person name="Sitter C."/>
            <person name="Sutton G.G."/>
            <person name="Venter J.C."/>
            <person name="Woodage T."/>
            <person name="Smith D."/>
            <person name="Lee H.-M."/>
            <person name="Gustafson E."/>
            <person name="Cahill P."/>
            <person name="Kana A."/>
            <person name="Doucette-Stamm L."/>
            <person name="Weinstock K."/>
            <person name="Fechtel K."/>
            <person name="Weiss R.B."/>
            <person name="Dunn D.M."/>
            <person name="Green E.D."/>
            <person name="Blakesley R.W."/>
            <person name="Bouffard G.G."/>
            <person name="De Jong P.J."/>
            <person name="Osoegawa K."/>
            <person name="Zhu B."/>
            <person name="Marra M."/>
            <person name="Schein J."/>
            <person name="Bosdet I."/>
            <person name="Fjell C."/>
            <person name="Jones S."/>
            <person name="Krzywinski M."/>
            <person name="Mathewson C."/>
            <person name="Siddiqui A."/>
            <person name="Wye N."/>
            <person name="McPherson J."/>
            <person name="Zhao S."/>
            <person name="Fraser C.M."/>
            <person name="Shetty J."/>
            <person name="Shatsman S."/>
            <person name="Geer K."/>
            <person name="Chen Y."/>
            <person name="Abramzon S."/>
            <person name="Nierman W.C."/>
            <person name="Havlak P.H."/>
            <person name="Chen R."/>
            <person name="Durbin K.J."/>
            <person name="Egan A."/>
            <person name="Ren Y."/>
            <person name="Song X.-Z."/>
            <person name="Li B."/>
            <person name="Liu Y."/>
            <person name="Qin X."/>
            <person name="Cawley S."/>
            <person name="Cooney A.J."/>
            <person name="D'Souza L.M."/>
            <person name="Martin K."/>
            <person name="Wu J.Q."/>
            <person name="Gonzalez-Garay M.L."/>
            <person name="Jackson A.R."/>
            <person name="Kalafus K.J."/>
            <person name="McLeod M.P."/>
            <person name="Milosavljevic A."/>
            <person name="Virk D."/>
            <person name="Volkov A."/>
            <person name="Wheeler D.A."/>
            <person name="Zhang Z."/>
            <person name="Bailey J.A."/>
            <person name="Eichler E.E."/>
            <person name="Tuzun E."/>
            <person name="Birney E."/>
            <person name="Mongin E."/>
            <person name="Ureta-Vidal A."/>
            <person name="Woodwark C."/>
            <person name="Zdobnov E."/>
            <person name="Bork P."/>
            <person name="Suyama M."/>
            <person name="Torrents D."/>
            <person name="Alexandersson M."/>
            <person name="Trask B.J."/>
            <person name="Young J.M."/>
            <person name="Huang H."/>
            <person name="Wang H."/>
            <person name="Xing H."/>
            <person name="Daniels S."/>
            <person name="Gietzen D."/>
            <person name="Schmidt J."/>
            <person name="Stevens K."/>
            <person name="Vitt U."/>
            <person name="Wingrove J."/>
            <person name="Camara F."/>
            <person name="Mar Alba M."/>
            <person name="Abril J.F."/>
            <person name="Guigo R."/>
            <person name="Smit A."/>
            <person name="Dubchak I."/>
            <person name="Rubin E.M."/>
            <person name="Couronne O."/>
            <person name="Poliakov A."/>
            <person name="Huebner N."/>
            <person name="Ganten D."/>
            <person name="Goesele C."/>
            <person name="Hummel O."/>
            <person name="Kreitler T."/>
            <person name="Lee Y.-A."/>
            <person name="Monti J."/>
            <person name="Schulz H."/>
            <person name="Zimdahl H."/>
            <person name="Himmelbauer H."/>
            <person name="Lehrach H."/>
            <person name="Jacob H.J."/>
            <person name="Bromberg S."/>
            <person name="Gullings-Handley J."/>
            <person name="Jensen-Seaman M.I."/>
            <person name="Kwitek A.E."/>
            <person name="Lazar J."/>
            <person name="Pasko D."/>
            <person name="Tonellato P.J."/>
            <person name="Twigger S."/>
            <person name="Ponting C.P."/>
            <person name="Duarte J.M."/>
            <person name="Rice S."/>
            <person name="Goodstadt L."/>
            <person name="Beatson S.A."/>
            <person name="Emes R.D."/>
            <person name="Winter E.E."/>
            <person name="Webber C."/>
            <person name="Brandt P."/>
            <person name="Nyakatura G."/>
            <person name="Adetobi M."/>
            <person name="Chiaromonte F."/>
            <person name="Elnitski L."/>
            <person name="Eswara P."/>
            <person name="Hardison R.C."/>
            <person name="Hou M."/>
            <person name="Kolbe D."/>
            <person name="Makova K."/>
            <person name="Miller W."/>
            <person name="Nekrutenko A."/>
            <person name="Riemer C."/>
            <person name="Schwartz S."/>
            <person name="Taylor J."/>
            <person name="Yang S."/>
            <person name="Zhang Y."/>
            <person name="Lindpaintner K."/>
            <person name="Andrews T.D."/>
            <person name="Caccamo M."/>
            <person name="Clamp M."/>
            <person name="Clarke L."/>
            <person name="Curwen V."/>
            <person name="Durbin R.M."/>
            <person name="Eyras E."/>
            <person name="Searle S.M."/>
            <person name="Cooper G.M."/>
            <person name="Batzoglou S."/>
            <person name="Brudno M."/>
            <person name="Sidow A."/>
            <person name="Stone E.A."/>
            <person name="Payseur B.A."/>
            <person name="Bourque G."/>
            <person name="Lopez-Otin C."/>
            <person name="Puente X.S."/>
            <person name="Chakrabarti K."/>
            <person name="Chatterji S."/>
            <person name="Dewey C."/>
            <person name="Pachter L."/>
            <person name="Bray N."/>
            <person name="Yap V.B."/>
            <person name="Caspi A."/>
            <person name="Tesler G."/>
            <person name="Pevzner P.A."/>
            <person name="Haussler D."/>
            <person name="Roskin K.M."/>
            <person name="Baertsch R."/>
            <person name="Clawson H."/>
            <person name="Furey T.S."/>
            <person name="Hinrichs A.S."/>
            <person name="Karolchik D."/>
            <person name="Kent W.J."/>
            <person name="Rosenbloom K.R."/>
            <person name="Trumbower H."/>
            <person name="Weirauch M."/>
            <person name="Cooper D.N."/>
            <person name="Stenson P.D."/>
            <person name="Ma B."/>
            <person name="Brent M."/>
            <person name="Arumugam M."/>
            <person name="Shteynberg D."/>
            <person name="Copley R.R."/>
            <person name="Taylor M.S."/>
            <person name="Riethman H."/>
            <person name="Mudunuri U."/>
            <person name="Peterson J."/>
            <person name="Guyer M."/>
            <person name="Felsenfeld A."/>
            <person name="Old S."/>
            <person name="Mockrin S."/>
            <person name="Collins F.S."/>
        </authorList>
    </citation>
    <scope>NUCLEOTIDE SEQUENCE [LARGE SCALE GENOMIC DNA]</scope>
    <source>
        <strain>Brown Norway</strain>
    </source>
</reference>
<reference key="2">
    <citation type="journal article" date="2013" name="Science">
        <title>The human language-associated gene SRPX2 regulates synapse formation and vocalization in mice.</title>
        <authorList>
            <person name="Sia G.M."/>
            <person name="Clem R.L."/>
            <person name="Huganir R.L."/>
        </authorList>
    </citation>
    <scope>FUNCTION</scope>
</reference>
<accession>P0CF24</accession>
<protein>
    <recommendedName>
        <fullName>Forkhead box protein P2</fullName>
    </recommendedName>
</protein>
<gene>
    <name type="primary">Foxp2</name>
</gene>
<sequence>MMQESATETISNSSMNQNGMSTLSSQLDAGSRDGRSSGDTSSEVSTVELLHLQQQQALQAARQLLLQQQTSGLKSPKSSDKQRPLQVPVSVAMMTPQVITPQQMQQILQQQVLSPQQLQALLQQQQAVMLQQQQLQEFYKKQQEQLHLQLLQQQQQQQQQQQQQQQQQQQQQQQQQQQQQQQQQQQQHPGKQAKEQQQQQQQQQLAAQQLVFQQQLLQMQQLQQQQHLLSLQCQGLISIPPGQAALPVQSLPQAGLSPAEIQQLWKEVTGVHSQEDNGIKHGGLDLTTNNSSSTTSSTTSKASPPITHHSIVNGQSSVLNARRDSSSHEETGASHTLYGHGVCKWPGCESICEDFGQFLKHLNNEHALDDRSTAQCRVQMQVVQQLEIQLSKERERLQAMMTHLHMRPSEPKPSPKPLNLVSSVTMSKNMLETSPQSLPQTPTTPTAPVTPITQGPSVITPASVPNVGAIRRRHSDKYNIPMSSEIAPNYEFYKNADVRPPFTYATLIRQAIMESSDRQLTLNEIYSWFTRTFAYFRRNAATWKNAVRHNLSLHKCFVRVENVKGAVWTVDEVEYQKRRSQKITGSPTLVKNIPTSLGYGAALNASLQAALAESSLPLLSNPGLINNASSGLLQAVHEDLNGSLDHIDSNGNSSPGCSPQPHIHSIHVKEEPVIAEDEDCPMSLVTTANHSPELEDDREIEEEPLSEDLE</sequence>
<dbReference type="EMBL" id="AC111321">
    <property type="status" value="NOT_ANNOTATED_CDS"/>
    <property type="molecule type" value="Genomic_DNA"/>
</dbReference>
<dbReference type="EMBL" id="AC128862">
    <property type="status" value="NOT_ANNOTATED_CDS"/>
    <property type="molecule type" value="Genomic_DNA"/>
</dbReference>
<dbReference type="EMBL" id="AC115440">
    <property type="status" value="NOT_ANNOTATED_CDS"/>
    <property type="molecule type" value="Genomic_DNA"/>
</dbReference>
<dbReference type="EMBL" id="AC122630">
    <property type="status" value="NOT_ANNOTATED_CDS"/>
    <property type="molecule type" value="Genomic_DNA"/>
</dbReference>
<dbReference type="RefSeq" id="NP_001258033.1">
    <property type="nucleotide sequence ID" value="NM_001271104.1"/>
</dbReference>
<dbReference type="RefSeq" id="XP_063142546.1">
    <property type="nucleotide sequence ID" value="XM_063286476.1"/>
</dbReference>
<dbReference type="SMR" id="P0CF24"/>
<dbReference type="BioGRID" id="271345">
    <property type="interactions" value="1"/>
</dbReference>
<dbReference type="FunCoup" id="P0CF24">
    <property type="interactions" value="1669"/>
</dbReference>
<dbReference type="IntAct" id="P0CF24">
    <property type="interactions" value="1"/>
</dbReference>
<dbReference type="STRING" id="10116.ENSRNOP00000069190"/>
<dbReference type="iPTMnet" id="P0CF24"/>
<dbReference type="PhosphoSitePlus" id="P0CF24"/>
<dbReference type="PaxDb" id="10116-ENSRNOP00000007759"/>
<dbReference type="GeneID" id="500037"/>
<dbReference type="KEGG" id="rno:500037"/>
<dbReference type="UCSC" id="RGD:1559697">
    <property type="organism name" value="rat"/>
</dbReference>
<dbReference type="AGR" id="RGD:1559697"/>
<dbReference type="CTD" id="93986"/>
<dbReference type="RGD" id="1559697">
    <property type="gene designation" value="Foxp2"/>
</dbReference>
<dbReference type="VEuPathDB" id="HostDB:ENSRNOG00000054508"/>
<dbReference type="eggNOG" id="KOG4385">
    <property type="taxonomic scope" value="Eukaryota"/>
</dbReference>
<dbReference type="HOGENOM" id="CLU_019502_3_1_1"/>
<dbReference type="InParanoid" id="P0CF24"/>
<dbReference type="PhylomeDB" id="P0CF24"/>
<dbReference type="PRO" id="PR:P0CF24"/>
<dbReference type="Proteomes" id="UP000002494">
    <property type="component" value="Chromosome 4"/>
</dbReference>
<dbReference type="Bgee" id="ENSRNOG00000054508">
    <property type="expression patterns" value="Expressed in pancreas and 16 other cell types or tissues"/>
</dbReference>
<dbReference type="GO" id="GO:0005634">
    <property type="term" value="C:nucleus"/>
    <property type="evidence" value="ECO:0000266"/>
    <property type="project" value="RGD"/>
</dbReference>
<dbReference type="GO" id="GO:0003677">
    <property type="term" value="F:DNA binding"/>
    <property type="evidence" value="ECO:0000266"/>
    <property type="project" value="RGD"/>
</dbReference>
<dbReference type="GO" id="GO:0003700">
    <property type="term" value="F:DNA-binding transcription factor activity"/>
    <property type="evidence" value="ECO:0000266"/>
    <property type="project" value="RGD"/>
</dbReference>
<dbReference type="GO" id="GO:0001227">
    <property type="term" value="F:DNA-binding transcription repressor activity, RNA polymerase II-specific"/>
    <property type="evidence" value="ECO:0000266"/>
    <property type="project" value="RGD"/>
</dbReference>
<dbReference type="GO" id="GO:0042802">
    <property type="term" value="F:identical protein binding"/>
    <property type="evidence" value="ECO:0000266"/>
    <property type="project" value="RGD"/>
</dbReference>
<dbReference type="GO" id="GO:0050681">
    <property type="term" value="F:nuclear androgen receptor binding"/>
    <property type="evidence" value="ECO:0000353"/>
    <property type="project" value="RGD"/>
</dbReference>
<dbReference type="GO" id="GO:0042803">
    <property type="term" value="F:protein homodimerization activity"/>
    <property type="evidence" value="ECO:0000266"/>
    <property type="project" value="RGD"/>
</dbReference>
<dbReference type="GO" id="GO:0000978">
    <property type="term" value="F:RNA polymerase II cis-regulatory region sequence-specific DNA binding"/>
    <property type="evidence" value="ECO:0000266"/>
    <property type="project" value="RGD"/>
</dbReference>
<dbReference type="GO" id="GO:0043565">
    <property type="term" value="F:sequence-specific DNA binding"/>
    <property type="evidence" value="ECO:0000266"/>
    <property type="project" value="RGD"/>
</dbReference>
<dbReference type="GO" id="GO:0001221">
    <property type="term" value="F:transcription coregulator binding"/>
    <property type="evidence" value="ECO:0000266"/>
    <property type="project" value="RGD"/>
</dbReference>
<dbReference type="GO" id="GO:0008270">
    <property type="term" value="F:zinc ion binding"/>
    <property type="evidence" value="ECO:0007669"/>
    <property type="project" value="UniProtKB-KW"/>
</dbReference>
<dbReference type="GO" id="GO:0043010">
    <property type="term" value="P:camera-type eye development"/>
    <property type="evidence" value="ECO:0000266"/>
    <property type="project" value="RGD"/>
</dbReference>
<dbReference type="GO" id="GO:0021757">
    <property type="term" value="P:caudate nucleus development"/>
    <property type="evidence" value="ECO:0000266"/>
    <property type="project" value="RGD"/>
</dbReference>
<dbReference type="GO" id="GO:0021702">
    <property type="term" value="P:cerebellar Purkinje cell differentiation"/>
    <property type="evidence" value="ECO:0000266"/>
    <property type="project" value="RGD"/>
</dbReference>
<dbReference type="GO" id="GO:0021549">
    <property type="term" value="P:cerebellum development"/>
    <property type="evidence" value="ECO:0000266"/>
    <property type="project" value="RGD"/>
</dbReference>
<dbReference type="GO" id="GO:0021987">
    <property type="term" value="P:cerebral cortex development"/>
    <property type="evidence" value="ECO:0000266"/>
    <property type="project" value="RGD"/>
</dbReference>
<dbReference type="GO" id="GO:0060502">
    <property type="term" value="P:epithelial cell proliferation involved in lung morphogenesis"/>
    <property type="evidence" value="ECO:0000266"/>
    <property type="project" value="RGD"/>
</dbReference>
<dbReference type="GO" id="GO:0030900">
    <property type="term" value="P:forebrain development"/>
    <property type="evidence" value="ECO:0000270"/>
    <property type="project" value="RGD"/>
</dbReference>
<dbReference type="GO" id="GO:0010467">
    <property type="term" value="P:gene expression"/>
    <property type="evidence" value="ECO:0000266"/>
    <property type="project" value="RGD"/>
</dbReference>
<dbReference type="GO" id="GO:0098582">
    <property type="term" value="P:innate vocalization behavior"/>
    <property type="evidence" value="ECO:0000315"/>
    <property type="project" value="RGD"/>
</dbReference>
<dbReference type="GO" id="GO:0048286">
    <property type="term" value="P:lung alveolus development"/>
    <property type="evidence" value="ECO:0000266"/>
    <property type="project" value="RGD"/>
</dbReference>
<dbReference type="GO" id="GO:0030324">
    <property type="term" value="P:lung development"/>
    <property type="evidence" value="ECO:0000266"/>
    <property type="project" value="RGD"/>
</dbReference>
<dbReference type="GO" id="GO:0045892">
    <property type="term" value="P:negative regulation of DNA-templated transcription"/>
    <property type="evidence" value="ECO:0000266"/>
    <property type="project" value="RGD"/>
</dbReference>
<dbReference type="GO" id="GO:0000122">
    <property type="term" value="P:negative regulation of transcription by RNA polymerase II"/>
    <property type="evidence" value="ECO:0000266"/>
    <property type="project" value="RGD"/>
</dbReference>
<dbReference type="GO" id="GO:0050679">
    <property type="term" value="P:positive regulation of epithelial cell proliferation"/>
    <property type="evidence" value="ECO:0000266"/>
    <property type="project" value="RGD"/>
</dbReference>
<dbReference type="GO" id="GO:0060501">
    <property type="term" value="P:positive regulation of epithelial cell proliferation involved in lung morphogenesis"/>
    <property type="evidence" value="ECO:0000266"/>
    <property type="project" value="RGD"/>
</dbReference>
<dbReference type="GO" id="GO:0002053">
    <property type="term" value="P:positive regulation of mesenchymal cell proliferation"/>
    <property type="evidence" value="ECO:0000266"/>
    <property type="project" value="RGD"/>
</dbReference>
<dbReference type="GO" id="GO:0009791">
    <property type="term" value="P:post-embryonic development"/>
    <property type="evidence" value="ECO:0000266"/>
    <property type="project" value="RGD"/>
</dbReference>
<dbReference type="GO" id="GO:0021758">
    <property type="term" value="P:putamen development"/>
    <property type="evidence" value="ECO:0000266"/>
    <property type="project" value="RGD"/>
</dbReference>
<dbReference type="GO" id="GO:0006357">
    <property type="term" value="P:regulation of transcription by RNA polymerase II"/>
    <property type="evidence" value="ECO:0000318"/>
    <property type="project" value="GO_Central"/>
</dbReference>
<dbReference type="GO" id="GO:0033574">
    <property type="term" value="P:response to testosterone"/>
    <property type="evidence" value="ECO:0000270"/>
    <property type="project" value="RGD"/>
</dbReference>
<dbReference type="GO" id="GO:0060013">
    <property type="term" value="P:righting reflex"/>
    <property type="evidence" value="ECO:0000266"/>
    <property type="project" value="RGD"/>
</dbReference>
<dbReference type="GO" id="GO:0007519">
    <property type="term" value="P:skeletal muscle tissue development"/>
    <property type="evidence" value="ECO:0000266"/>
    <property type="project" value="RGD"/>
</dbReference>
<dbReference type="GO" id="GO:0048745">
    <property type="term" value="P:smooth muscle tissue development"/>
    <property type="evidence" value="ECO:0000266"/>
    <property type="project" value="RGD"/>
</dbReference>
<dbReference type="GO" id="GO:0042297">
    <property type="term" value="P:vocal learning"/>
    <property type="evidence" value="ECO:0000266"/>
    <property type="project" value="RGD"/>
</dbReference>
<dbReference type="GO" id="GO:0071625">
    <property type="term" value="P:vocalization behavior"/>
    <property type="evidence" value="ECO:0000266"/>
    <property type="project" value="RGD"/>
</dbReference>
<dbReference type="CDD" id="cd20065">
    <property type="entry name" value="FH_FOXP2"/>
    <property type="match status" value="1"/>
</dbReference>
<dbReference type="FunFam" id="1.20.5.340:FF:000005">
    <property type="entry name" value="Forkhead box P1, isoform CRA_f"/>
    <property type="match status" value="1"/>
</dbReference>
<dbReference type="FunFam" id="1.10.10.10:FF:000010">
    <property type="entry name" value="Forkhead box P2 isoform B"/>
    <property type="match status" value="1"/>
</dbReference>
<dbReference type="Gene3D" id="1.20.5.340">
    <property type="match status" value="1"/>
</dbReference>
<dbReference type="Gene3D" id="1.10.10.10">
    <property type="entry name" value="Winged helix-like DNA-binding domain superfamily/Winged helix DNA-binding domain"/>
    <property type="match status" value="1"/>
</dbReference>
<dbReference type="InterPro" id="IPR047412">
    <property type="entry name" value="FH_FOXP1_P2"/>
</dbReference>
<dbReference type="InterPro" id="IPR001766">
    <property type="entry name" value="Fork_head_dom"/>
</dbReference>
<dbReference type="InterPro" id="IPR050998">
    <property type="entry name" value="FOXP"/>
</dbReference>
<dbReference type="InterPro" id="IPR032354">
    <property type="entry name" value="FOXP-CC"/>
</dbReference>
<dbReference type="InterPro" id="IPR030456">
    <property type="entry name" value="TF_fork_head_CS_2"/>
</dbReference>
<dbReference type="InterPro" id="IPR036388">
    <property type="entry name" value="WH-like_DNA-bd_sf"/>
</dbReference>
<dbReference type="InterPro" id="IPR036390">
    <property type="entry name" value="WH_DNA-bd_sf"/>
</dbReference>
<dbReference type="PANTHER" id="PTHR45796">
    <property type="entry name" value="FORKHEAD BOX P, ISOFORM C"/>
    <property type="match status" value="1"/>
</dbReference>
<dbReference type="PANTHER" id="PTHR45796:SF1">
    <property type="entry name" value="FORKHEAD BOX PROTEIN P2"/>
    <property type="match status" value="1"/>
</dbReference>
<dbReference type="Pfam" id="PF00250">
    <property type="entry name" value="Forkhead"/>
    <property type="match status" value="1"/>
</dbReference>
<dbReference type="Pfam" id="PF16159">
    <property type="entry name" value="FOXP-CC"/>
    <property type="match status" value="1"/>
</dbReference>
<dbReference type="PRINTS" id="PR00053">
    <property type="entry name" value="FORKHEAD"/>
</dbReference>
<dbReference type="SMART" id="SM00339">
    <property type="entry name" value="FH"/>
    <property type="match status" value="1"/>
</dbReference>
<dbReference type="SUPFAM" id="SSF46785">
    <property type="entry name" value="Winged helix' DNA-binding domain"/>
    <property type="match status" value="1"/>
</dbReference>
<dbReference type="PROSITE" id="PS00658">
    <property type="entry name" value="FORK_HEAD_2"/>
    <property type="match status" value="1"/>
</dbReference>
<dbReference type="PROSITE" id="PS50039">
    <property type="entry name" value="FORK_HEAD_3"/>
    <property type="match status" value="1"/>
</dbReference>
<dbReference type="PROSITE" id="PS00028">
    <property type="entry name" value="ZINC_FINGER_C2H2_1"/>
    <property type="match status" value="1"/>
</dbReference>
<proteinExistence type="inferred from homology"/>
<keyword id="KW-0175">Coiled coil</keyword>
<keyword id="KW-0238">DNA-binding</keyword>
<keyword id="KW-0479">Metal-binding</keyword>
<keyword id="KW-0539">Nucleus</keyword>
<keyword id="KW-1185">Reference proteome</keyword>
<keyword id="KW-0678">Repressor</keyword>
<keyword id="KW-0804">Transcription</keyword>
<keyword id="KW-0805">Transcription regulation</keyword>
<keyword id="KW-0862">Zinc</keyword>
<keyword id="KW-0863">Zinc-finger</keyword>
<feature type="chain" id="PRO_0000393401" description="Forkhead box protein P2">
    <location>
        <begin position="1"/>
        <end position="710"/>
    </location>
</feature>
<feature type="zinc finger region" description="C2H2-type">
    <location>
        <begin position="343"/>
        <end position="366"/>
    </location>
</feature>
<feature type="DNA-binding region" description="Fork-head" evidence="4">
    <location>
        <begin position="499"/>
        <end position="589"/>
    </location>
</feature>
<feature type="region of interest" description="Disordered" evidence="5">
    <location>
        <begin position="1"/>
        <end position="44"/>
    </location>
</feature>
<feature type="region of interest" description="Disordered" evidence="5">
    <location>
        <begin position="272"/>
        <end position="334"/>
    </location>
</feature>
<feature type="region of interest" description="Leucine-zipper">
    <location>
        <begin position="383"/>
        <end position="404"/>
    </location>
</feature>
<feature type="region of interest" description="CTBP1-binding" evidence="1">
    <location>
        <begin position="417"/>
        <end position="421"/>
    </location>
</feature>
<feature type="region of interest" description="Disordered" evidence="5">
    <location>
        <begin position="433"/>
        <end position="460"/>
    </location>
</feature>
<feature type="region of interest" description="Disordered" evidence="5">
    <location>
        <begin position="644"/>
        <end position="663"/>
    </location>
</feature>
<feature type="region of interest" description="Disordered" evidence="5">
    <location>
        <begin position="673"/>
        <end position="710"/>
    </location>
</feature>
<feature type="compositionally biased region" description="Polar residues" evidence="5">
    <location>
        <begin position="1"/>
        <end position="28"/>
    </location>
</feature>
<feature type="compositionally biased region" description="Basic and acidic residues" evidence="5">
    <location>
        <begin position="273"/>
        <end position="283"/>
    </location>
</feature>
<feature type="compositionally biased region" description="Low complexity" evidence="5">
    <location>
        <begin position="287"/>
        <end position="300"/>
    </location>
</feature>
<feature type="compositionally biased region" description="Polar residues" evidence="5">
    <location>
        <begin position="310"/>
        <end position="319"/>
    </location>
</feature>
<feature type="compositionally biased region" description="Basic and acidic residues" evidence="5">
    <location>
        <begin position="321"/>
        <end position="332"/>
    </location>
</feature>
<feature type="compositionally biased region" description="Low complexity" evidence="5">
    <location>
        <begin position="433"/>
        <end position="454"/>
    </location>
</feature>
<feature type="compositionally biased region" description="Acidic residues" evidence="5">
    <location>
        <begin position="694"/>
        <end position="710"/>
    </location>
</feature>
<comment type="function">
    <text evidence="1 6">Transcriptional repressor that may play a role in the specification and differentiation of lung epithelium. May also play a role in developing neural, gastrointestinal and cardiovascular tissues. Can act with CTBP1 to synergistically repress transcription but CTPBP1 is not essential (By similarity). Plays a role in synapse formation by regulating SRPX2 levels.</text>
</comment>
<comment type="subunit">
    <text evidence="2 3">Forms homodimers and heterodimers with FOXP1 and FOXP4. Dimerization is required for DNA-binding. Interacts with CTBP1 (By similarity). Interacts with FOXP1 (By similarity). Interacts with TBR1 (By similarity). Interacts with ZMYM2 (By similarity).</text>
</comment>
<comment type="subcellular location">
    <subcellularLocation>
        <location evidence="7">Nucleus</location>
    </subcellularLocation>
</comment>
<comment type="domain">
    <text evidence="1">The leucine-zipper is required for dimerization and transcriptional repression.</text>
</comment>
<organism>
    <name type="scientific">Rattus norvegicus</name>
    <name type="common">Rat</name>
    <dbReference type="NCBI Taxonomy" id="10116"/>
    <lineage>
        <taxon>Eukaryota</taxon>
        <taxon>Metazoa</taxon>
        <taxon>Chordata</taxon>
        <taxon>Craniata</taxon>
        <taxon>Vertebrata</taxon>
        <taxon>Euteleostomi</taxon>
        <taxon>Mammalia</taxon>
        <taxon>Eutheria</taxon>
        <taxon>Euarchontoglires</taxon>
        <taxon>Glires</taxon>
        <taxon>Rodentia</taxon>
        <taxon>Myomorpha</taxon>
        <taxon>Muroidea</taxon>
        <taxon>Muridae</taxon>
        <taxon>Murinae</taxon>
        <taxon>Rattus</taxon>
    </lineage>
</organism>